<sequence length="634" mass="72933">MSPVSAIPLAYKLCLPRSLISSSRELNPLHITIPNLGMCRRGKSMAPASMSMILTAAVSDDDRVQRRRGNYHSNLWDDDFIQSLSTPYGEPSYRESAERLKGEIKKMFRSMSKEDEELITPLNDLIQRLWMVDSVERLGIDRHFKNEIKSALDYVYSYWNEKGIGCGRDSVVADLNSTALGFRTLRLHGYNVSSEVLKVFEDQNGQFACSPSKTEGEIRSALNLYRASLIAFPGEKVMEDAEIFSSRYLKEAVQKIPDCSLSQEIAYALEYGWHTNMPRLEARNYMDVFGHPSSPWLKKNKTQYMDGEKLLELAKLEFNIFHSLQQEELQYISRWWKDSGLPKLAFSRHRHVEYYTLGSCIATDPKHRAFRLGFVKTCHLNTVLDDIYDTFGTMDEIELFTEAVRRWDPSETESLPDYMKGVYMVLYEALTEMAQEAEKTQGRDTLNYARKAWEIYLDSYIQEAKWIASGYLPTFQEYFENGKISSAYRAAALTPILTLDVPLPEYILKGIDFPSRFNDLASSFLRLRGDTRCYKADRARGEEASCISCYMKDNPGSTEEDALNHINSMINEIIKELNWELLRPDSNIPMPARKHAFDITRALHHLYKYRDGFSVATKETKSLVSRMVLEPVTL</sequence>
<evidence type="ECO:0000250" key="1">
    <source>
        <dbReference type="UniProtKB" id="A0A1C9J6A7"/>
    </source>
</evidence>
<evidence type="ECO:0000250" key="2">
    <source>
        <dbReference type="UniProtKB" id="Q40577"/>
    </source>
</evidence>
<evidence type="ECO:0000250" key="3">
    <source>
        <dbReference type="UniProtKB" id="Q6JD73"/>
    </source>
</evidence>
<evidence type="ECO:0000255" key="4"/>
<evidence type="ECO:0000269" key="5">
    <source>
    </source>
</evidence>
<evidence type="ECO:0000303" key="6">
    <source>
    </source>
</evidence>
<evidence type="ECO:0000305" key="7"/>
<feature type="transit peptide" description="Chloroplast" evidence="4">
    <location>
        <begin position="1"/>
        <end position="21"/>
    </location>
</feature>
<feature type="chain" id="PRO_0000455262" description="(-)-limonene synthase, chloroplastic">
    <location>
        <begin position="22"/>
        <end position="634"/>
    </location>
</feature>
<feature type="short sequence motif" description="DDXXD motif" evidence="7">
    <location>
        <begin position="385"/>
        <end position="389"/>
    </location>
</feature>
<feature type="binding site" evidence="2">
    <location>
        <position position="348"/>
    </location>
    <ligand>
        <name>(2E)-geranyl diphosphate</name>
        <dbReference type="ChEBI" id="CHEBI:58057"/>
    </ligand>
</feature>
<feature type="binding site" evidence="2">
    <location>
        <position position="385"/>
    </location>
    <ligand>
        <name>(2E)-geranyl diphosphate</name>
        <dbReference type="ChEBI" id="CHEBI:58057"/>
    </ligand>
</feature>
<feature type="binding site" evidence="2">
    <location>
        <position position="385"/>
    </location>
    <ligand>
        <name>Mg(2+)</name>
        <dbReference type="ChEBI" id="CHEBI:18420"/>
        <label>1</label>
    </ligand>
</feature>
<feature type="binding site" evidence="2">
    <location>
        <position position="385"/>
    </location>
    <ligand>
        <name>Mg(2+)</name>
        <dbReference type="ChEBI" id="CHEBI:18420"/>
        <label>2</label>
    </ligand>
</feature>
<feature type="binding site" evidence="2">
    <location>
        <position position="389"/>
    </location>
    <ligand>
        <name>(2E)-geranyl diphosphate</name>
        <dbReference type="ChEBI" id="CHEBI:58057"/>
    </ligand>
</feature>
<feature type="binding site" evidence="2">
    <location>
        <position position="389"/>
    </location>
    <ligand>
        <name>Mg(2+)</name>
        <dbReference type="ChEBI" id="CHEBI:18420"/>
        <label>1</label>
    </ligand>
</feature>
<feature type="binding site" evidence="2">
    <location>
        <position position="389"/>
    </location>
    <ligand>
        <name>Mg(2+)</name>
        <dbReference type="ChEBI" id="CHEBI:18420"/>
        <label>2</label>
    </ligand>
</feature>
<feature type="binding site" evidence="2">
    <location>
        <position position="526"/>
    </location>
    <ligand>
        <name>(2E)-geranyl diphosphate</name>
        <dbReference type="ChEBI" id="CHEBI:58057"/>
    </ligand>
</feature>
<feature type="binding site" evidence="2">
    <location>
        <position position="529"/>
    </location>
    <ligand>
        <name>(2E)-geranyl diphosphate</name>
        <dbReference type="ChEBI" id="CHEBI:58057"/>
    </ligand>
</feature>
<feature type="binding site" evidence="2">
    <location>
        <position position="529"/>
    </location>
    <ligand>
        <name>Mg(2+)</name>
        <dbReference type="ChEBI" id="CHEBI:18420"/>
        <label>3</label>
    </ligand>
</feature>
<feature type="binding site" evidence="2">
    <location>
        <position position="537"/>
    </location>
    <ligand>
        <name>Mg(2+)</name>
        <dbReference type="ChEBI" id="CHEBI:18420"/>
        <label>3</label>
    </ligand>
</feature>
<organism>
    <name type="scientific">Picea sitchensis</name>
    <name type="common">Sitka spruce</name>
    <name type="synonym">Pinus sitchensis</name>
    <dbReference type="NCBI Taxonomy" id="3332"/>
    <lineage>
        <taxon>Eukaryota</taxon>
        <taxon>Viridiplantae</taxon>
        <taxon>Streptophyta</taxon>
        <taxon>Embryophyta</taxon>
        <taxon>Tracheophyta</taxon>
        <taxon>Spermatophyta</taxon>
        <taxon>Pinopsida</taxon>
        <taxon>Pinidae</taxon>
        <taxon>Conifers I</taxon>
        <taxon>Pinales</taxon>
        <taxon>Pinaceae</taxon>
        <taxon>Picea</taxon>
    </lineage>
</organism>
<keyword id="KW-0150">Chloroplast</keyword>
<keyword id="KW-0456">Lyase</keyword>
<keyword id="KW-0460">Magnesium</keyword>
<keyword id="KW-0479">Metal-binding</keyword>
<keyword id="KW-0934">Plastid</keyword>
<keyword id="KW-0809">Transit peptide</keyword>
<name>LIMNS_PICSI</name>
<proteinExistence type="evidence at protein level"/>
<accession>Q20HU7</accession>
<dbReference type="EC" id="4.2.3.16" evidence="5"/>
<dbReference type="EMBL" id="DQ195275">
    <property type="protein sequence ID" value="ABA86248.1"/>
    <property type="molecule type" value="mRNA"/>
</dbReference>
<dbReference type="SMR" id="Q20HU7"/>
<dbReference type="OMA" id="NHINSMI"/>
<dbReference type="BRENDA" id="4.2.3.16">
    <property type="organism ID" value="8974"/>
</dbReference>
<dbReference type="UniPathway" id="UPA00213"/>
<dbReference type="UniPathway" id="UPA00924"/>
<dbReference type="GO" id="GO:0009507">
    <property type="term" value="C:chloroplast"/>
    <property type="evidence" value="ECO:0007669"/>
    <property type="project" value="UniProtKB-SubCell"/>
</dbReference>
<dbReference type="GO" id="GO:0050552">
    <property type="term" value="F:(4S)-limonene synthase activity"/>
    <property type="evidence" value="ECO:0000314"/>
    <property type="project" value="UniProtKB"/>
</dbReference>
<dbReference type="GO" id="GO:0000287">
    <property type="term" value="F:magnesium ion binding"/>
    <property type="evidence" value="ECO:0007669"/>
    <property type="project" value="InterPro"/>
</dbReference>
<dbReference type="GO" id="GO:0016102">
    <property type="term" value="P:diterpenoid biosynthetic process"/>
    <property type="evidence" value="ECO:0007669"/>
    <property type="project" value="InterPro"/>
</dbReference>
<dbReference type="GO" id="GO:0046250">
    <property type="term" value="P:limonene biosynthetic process"/>
    <property type="evidence" value="ECO:0000314"/>
    <property type="project" value="UniProtKB"/>
</dbReference>
<dbReference type="GO" id="GO:0043693">
    <property type="term" value="P:monoterpene biosynthetic process"/>
    <property type="evidence" value="ECO:0000314"/>
    <property type="project" value="UniProtKB"/>
</dbReference>
<dbReference type="GO" id="GO:0009611">
    <property type="term" value="P:response to wounding"/>
    <property type="evidence" value="ECO:0000270"/>
    <property type="project" value="UniProtKB"/>
</dbReference>
<dbReference type="CDD" id="cd00684">
    <property type="entry name" value="Terpene_cyclase_plant_C1"/>
    <property type="match status" value="1"/>
</dbReference>
<dbReference type="FunFam" id="1.50.10.130:FF:000002">
    <property type="entry name" value="Ent-copalyl diphosphate synthase, chloroplastic"/>
    <property type="match status" value="1"/>
</dbReference>
<dbReference type="FunFam" id="1.10.600.10:FF:000005">
    <property type="entry name" value="Ent-kaur-16-ene synthase, chloroplastic"/>
    <property type="match status" value="1"/>
</dbReference>
<dbReference type="Gene3D" id="1.10.600.10">
    <property type="entry name" value="Farnesyl Diphosphate Synthase"/>
    <property type="match status" value="1"/>
</dbReference>
<dbReference type="Gene3D" id="1.50.10.130">
    <property type="entry name" value="Terpene synthase, N-terminal domain"/>
    <property type="match status" value="1"/>
</dbReference>
<dbReference type="InterPro" id="IPR008949">
    <property type="entry name" value="Isoprenoid_synthase_dom_sf"/>
</dbReference>
<dbReference type="InterPro" id="IPR034741">
    <property type="entry name" value="Terpene_cyclase-like_1_C"/>
</dbReference>
<dbReference type="InterPro" id="IPR044814">
    <property type="entry name" value="Terpene_cyclase_plant_C1"/>
</dbReference>
<dbReference type="InterPro" id="IPR001906">
    <property type="entry name" value="Terpene_synth_N"/>
</dbReference>
<dbReference type="InterPro" id="IPR036965">
    <property type="entry name" value="Terpene_synth_N_sf"/>
</dbReference>
<dbReference type="InterPro" id="IPR050148">
    <property type="entry name" value="Terpene_synthase-like"/>
</dbReference>
<dbReference type="InterPro" id="IPR005630">
    <property type="entry name" value="Terpene_synthase_metal-bd"/>
</dbReference>
<dbReference type="InterPro" id="IPR008930">
    <property type="entry name" value="Terpenoid_cyclase/PrenylTrfase"/>
</dbReference>
<dbReference type="PANTHER" id="PTHR31739:SF25">
    <property type="entry name" value="(E,E)-GERANYLLINALOOL SYNTHASE"/>
    <property type="match status" value="1"/>
</dbReference>
<dbReference type="PANTHER" id="PTHR31739">
    <property type="entry name" value="ENT-COPALYL DIPHOSPHATE SYNTHASE, CHLOROPLASTIC"/>
    <property type="match status" value="1"/>
</dbReference>
<dbReference type="Pfam" id="PF01397">
    <property type="entry name" value="Terpene_synth"/>
    <property type="match status" value="1"/>
</dbReference>
<dbReference type="Pfam" id="PF03936">
    <property type="entry name" value="Terpene_synth_C"/>
    <property type="match status" value="1"/>
</dbReference>
<dbReference type="SFLD" id="SFLDS00005">
    <property type="entry name" value="Isoprenoid_Synthase_Type_I"/>
    <property type="match status" value="1"/>
</dbReference>
<dbReference type="SFLD" id="SFLDG01019">
    <property type="entry name" value="Terpene_Cyclase_Like_1_C_Termi"/>
    <property type="match status" value="1"/>
</dbReference>
<dbReference type="SFLD" id="SFLDG01014">
    <property type="entry name" value="Terpene_Cyclase_Like_1_N-term"/>
    <property type="match status" value="1"/>
</dbReference>
<dbReference type="SUPFAM" id="SSF48239">
    <property type="entry name" value="Terpenoid cyclases/Protein prenyltransferases"/>
    <property type="match status" value="1"/>
</dbReference>
<dbReference type="SUPFAM" id="SSF48576">
    <property type="entry name" value="Terpenoid synthases"/>
    <property type="match status" value="1"/>
</dbReference>
<gene>
    <name evidence="6" type="primary">TPS-Lim</name>
</gene>
<reference key="1">
    <citation type="journal article" date="2006" name="Plant Physiol.">
        <title>Wound-induced terpene synthase gene expression in Sitka spruce that exhibit resistance or susceptibility to attack by the white pine weevil.</title>
        <authorList>
            <person name="Byun-McKay A."/>
            <person name="Godard K.-A."/>
            <person name="Toudefallah M."/>
            <person name="Martin D.M."/>
            <person name="Alfaro R."/>
            <person name="King J."/>
            <person name="Bohlmann J."/>
            <person name="Plant A.L."/>
        </authorList>
    </citation>
    <scope>NUCLEOTIDE SEQUENCE [MRNA]</scope>
    <scope>FUNCTION</scope>
    <scope>CATALYTIC ACTIVITY</scope>
    <scope>PATHWAY</scope>
    <scope>INDUCTION BY WOUNDING</scope>
</reference>
<comment type="function">
    <text evidence="5">Monoterpene synthase (mono-TPS) involved in the biosynthesis of monoterpene natural products (PubMed:16415217). Catalyzes the conversion of (2E)-geranyl diphosphate (GPP) into (-)-limonene (PubMed:16415217). Not able to use geranylgeranyl pyrophosphate (GGPP) and farnesyl pyrophosphate (FPP) as substrates (PubMed:16415217).</text>
</comment>
<comment type="catalytic activity">
    <reaction evidence="5">
        <text>(2E)-geranyl diphosphate = (4S)-limonene + diphosphate</text>
        <dbReference type="Rhea" id="RHEA:12869"/>
        <dbReference type="ChEBI" id="CHEBI:15383"/>
        <dbReference type="ChEBI" id="CHEBI:33019"/>
        <dbReference type="ChEBI" id="CHEBI:58057"/>
        <dbReference type="EC" id="4.2.3.16"/>
    </reaction>
    <physiologicalReaction direction="left-to-right" evidence="5">
        <dbReference type="Rhea" id="RHEA:12870"/>
    </physiologicalReaction>
</comment>
<comment type="cofactor">
    <cofactor evidence="1">
        <name>Mg(2+)</name>
        <dbReference type="ChEBI" id="CHEBI:18420"/>
    </cofactor>
    <cofactor evidence="1">
        <name>Mn(2+)</name>
        <dbReference type="ChEBI" id="CHEBI:29035"/>
    </cofactor>
    <text evidence="1">Binds 3 Mg(2+) or Mn(2+) ions per subunit.</text>
</comment>
<comment type="pathway">
    <text evidence="5">Secondary metabolite biosynthesis; terpenoid biosynthesis.</text>
</comment>
<comment type="pathway">
    <text evidence="5">Terpene metabolism; oleoresin biosynthesis.</text>
</comment>
<comment type="subunit">
    <text evidence="3">Monomer.</text>
</comment>
<comment type="subcellular location">
    <subcellularLocation>
        <location evidence="4">Plastid</location>
        <location evidence="4">Chloroplast</location>
    </subcellularLocation>
</comment>
<comment type="induction">
    <text evidence="5">Accumulates in apical leaders upon wounding in resistant but not in susceptible to white pine weevil (Pissodes strobi) plants.</text>
</comment>
<comment type="domain">
    <text evidence="7">The Asp-Asp-Xaa-Xaa-Asp/Glu (DDXXD/E) motif is important for the catalytic activity, presumably through binding to Mg(2+).</text>
</comment>
<comment type="similarity">
    <text evidence="7">Belongs to the terpene synthase family. Tpsb subfamily.</text>
</comment>
<protein>
    <recommendedName>
        <fullName evidence="6">(-)-limonene synthase, chloroplastic</fullName>
        <shortName evidence="6">PsTPS-Lim</shortName>
        <ecNumber evidence="5">4.2.3.16</ecNumber>
    </recommendedName>
</protein>